<feature type="chain" id="PRO_0000162027" description="Uncharacterized RNA methyltransferase SAV_2389">
    <location>
        <begin position="1"/>
        <end position="433"/>
    </location>
</feature>
<feature type="domain" description="TRAM" evidence="2">
    <location>
        <begin position="1"/>
        <end position="59"/>
    </location>
</feature>
<feature type="active site" description="Nucleophile" evidence="3">
    <location>
        <position position="386"/>
    </location>
</feature>
<feature type="binding site" evidence="1">
    <location>
        <position position="72"/>
    </location>
    <ligand>
        <name>[4Fe-4S] cluster</name>
        <dbReference type="ChEBI" id="CHEBI:49883"/>
    </ligand>
</feature>
<feature type="binding site" evidence="1">
    <location>
        <position position="80"/>
    </location>
    <ligand>
        <name>[4Fe-4S] cluster</name>
        <dbReference type="ChEBI" id="CHEBI:49883"/>
    </ligand>
</feature>
<feature type="binding site" evidence="1">
    <location>
        <position position="83"/>
    </location>
    <ligand>
        <name>[4Fe-4S] cluster</name>
        <dbReference type="ChEBI" id="CHEBI:49883"/>
    </ligand>
</feature>
<feature type="binding site" evidence="1">
    <location>
        <position position="168"/>
    </location>
    <ligand>
        <name>[4Fe-4S] cluster</name>
        <dbReference type="ChEBI" id="CHEBI:49883"/>
    </ligand>
</feature>
<feature type="binding site" evidence="3">
    <location>
        <position position="262"/>
    </location>
    <ligand>
        <name>S-adenosyl-L-methionine</name>
        <dbReference type="ChEBI" id="CHEBI:59789"/>
    </ligand>
</feature>
<feature type="binding site" evidence="3">
    <location>
        <position position="291"/>
    </location>
    <ligand>
        <name>S-adenosyl-L-methionine</name>
        <dbReference type="ChEBI" id="CHEBI:59789"/>
    </ligand>
</feature>
<feature type="binding site" evidence="3">
    <location>
        <position position="315"/>
    </location>
    <ligand>
        <name>S-adenosyl-L-methionine</name>
        <dbReference type="ChEBI" id="CHEBI:59789"/>
    </ligand>
</feature>
<feature type="binding site" evidence="3">
    <location>
        <position position="359"/>
    </location>
    <ligand>
        <name>S-adenosyl-L-methionine</name>
        <dbReference type="ChEBI" id="CHEBI:59789"/>
    </ligand>
</feature>
<comment type="similarity">
    <text evidence="3">Belongs to the class I-like SAM-binding methyltransferase superfamily. RNA M5U methyltransferase family.</text>
</comment>
<protein>
    <recommendedName>
        <fullName>Uncharacterized RNA methyltransferase SAV_2389</fullName>
        <ecNumber>2.1.1.-</ecNumber>
    </recommendedName>
</protein>
<evidence type="ECO:0000250" key="1"/>
<evidence type="ECO:0000255" key="2">
    <source>
        <dbReference type="PROSITE-ProRule" id="PRU00208"/>
    </source>
</evidence>
<evidence type="ECO:0000255" key="3">
    <source>
        <dbReference type="PROSITE-ProRule" id="PRU01024"/>
    </source>
</evidence>
<reference key="1">
    <citation type="journal article" date="2001" name="Proc. Natl. Acad. Sci. U.S.A.">
        <title>Genome sequence of an industrial microorganism Streptomyces avermitilis: deducing the ability of producing secondary metabolites.</title>
        <authorList>
            <person name="Omura S."/>
            <person name="Ikeda H."/>
            <person name="Ishikawa J."/>
            <person name="Hanamoto A."/>
            <person name="Takahashi C."/>
            <person name="Shinose M."/>
            <person name="Takahashi Y."/>
            <person name="Horikawa H."/>
            <person name="Nakazawa H."/>
            <person name="Osonoe T."/>
            <person name="Kikuchi H."/>
            <person name="Shiba T."/>
            <person name="Sakaki Y."/>
            <person name="Hattori M."/>
        </authorList>
    </citation>
    <scope>NUCLEOTIDE SEQUENCE [LARGE SCALE GENOMIC DNA]</scope>
    <source>
        <strain>ATCC 31267 / DSM 46492 / JCM 5070 / NBRC 14893 / NCIMB 12804 / NRRL 8165 / MA-4680</strain>
    </source>
</reference>
<reference key="2">
    <citation type="journal article" date="2003" name="Nat. Biotechnol.">
        <title>Complete genome sequence and comparative analysis of the industrial microorganism Streptomyces avermitilis.</title>
        <authorList>
            <person name="Ikeda H."/>
            <person name="Ishikawa J."/>
            <person name="Hanamoto A."/>
            <person name="Shinose M."/>
            <person name="Kikuchi H."/>
            <person name="Shiba T."/>
            <person name="Sakaki Y."/>
            <person name="Hattori M."/>
            <person name="Omura S."/>
        </authorList>
    </citation>
    <scope>NUCLEOTIDE SEQUENCE [LARGE SCALE GENOMIC DNA]</scope>
    <source>
        <strain>ATCC 31267 / DSM 46492 / JCM 5070 / NBRC 14893 / NCIMB 12804 / NRRL 8165 / MA-4680</strain>
    </source>
</reference>
<proteinExistence type="inferred from homology"/>
<accession>Q93HB4</accession>
<organism>
    <name type="scientific">Streptomyces avermitilis (strain ATCC 31267 / DSM 46492 / JCM 5070 / NBRC 14893 / NCIMB 12804 / NRRL 8165 / MA-4680)</name>
    <dbReference type="NCBI Taxonomy" id="227882"/>
    <lineage>
        <taxon>Bacteria</taxon>
        <taxon>Bacillati</taxon>
        <taxon>Actinomycetota</taxon>
        <taxon>Actinomycetes</taxon>
        <taxon>Kitasatosporales</taxon>
        <taxon>Streptomycetaceae</taxon>
        <taxon>Streptomyces</taxon>
    </lineage>
</organism>
<name>Y2389_STRAW</name>
<keyword id="KW-0004">4Fe-4S</keyword>
<keyword id="KW-0408">Iron</keyword>
<keyword id="KW-0411">Iron-sulfur</keyword>
<keyword id="KW-0479">Metal-binding</keyword>
<keyword id="KW-0489">Methyltransferase</keyword>
<keyword id="KW-1185">Reference proteome</keyword>
<keyword id="KW-0949">S-adenosyl-L-methionine</keyword>
<keyword id="KW-0808">Transferase</keyword>
<gene>
    <name type="ordered locus">SAV_2389</name>
</gene>
<sequence>MGEEYEVEIGPVAHGGHCIARTSEGQVLFVRHALPGERVLARVTEGEEGARYLRADAVEILDASKDRVEAPCPYAGPGRCGGCDWQHAKPGAQRRLKGEVIAEQLQRLAGLTPEEAGWDGTVMPAEGDKLPAGEVPAWRTRVQYAVDADGNAGLRRHRSHEVEPIEHCMIAAPGVSELGIEERDWSGMESVDAIAATGSQDRMVILEPRPGARLPLVELDKPVSVMRVEEKDGGIHRVHGRAFVRERADGRTYRVGSGGFWQVHPMAADTLVKAVMQGLLPRKGDMALDLYCGVGLFAGALADRLGDKGAVLGIESGKRAVEDARHNLAAFERVRIEQGKVEAVLPRTGITEVDLIVLDPPRAGAGKKTVEQLVSLGARKIAYVACDPAALARDLGYFRDGGYKVRTLRAFDLFPMTHHVECVAILEPAAKGL</sequence>
<dbReference type="EC" id="2.1.1.-"/>
<dbReference type="EMBL" id="AB070947">
    <property type="protein sequence ID" value="BAB69275.1"/>
    <property type="molecule type" value="Genomic_DNA"/>
</dbReference>
<dbReference type="EMBL" id="BA000030">
    <property type="protein sequence ID" value="BAC70100.1"/>
    <property type="molecule type" value="Genomic_DNA"/>
</dbReference>
<dbReference type="SMR" id="Q93HB4"/>
<dbReference type="KEGG" id="sma:SAVERM_2389"/>
<dbReference type="eggNOG" id="COG2265">
    <property type="taxonomic scope" value="Bacteria"/>
</dbReference>
<dbReference type="HOGENOM" id="CLU_014689_7_0_11"/>
<dbReference type="Proteomes" id="UP000000428">
    <property type="component" value="Chromosome"/>
</dbReference>
<dbReference type="GO" id="GO:0051539">
    <property type="term" value="F:4 iron, 4 sulfur cluster binding"/>
    <property type="evidence" value="ECO:0007669"/>
    <property type="project" value="UniProtKB-KW"/>
</dbReference>
<dbReference type="GO" id="GO:0046872">
    <property type="term" value="F:metal ion binding"/>
    <property type="evidence" value="ECO:0007669"/>
    <property type="project" value="UniProtKB-KW"/>
</dbReference>
<dbReference type="GO" id="GO:0070041">
    <property type="term" value="F:rRNA (uridine-C5-)-methyltransferase activity"/>
    <property type="evidence" value="ECO:0007669"/>
    <property type="project" value="TreeGrafter"/>
</dbReference>
<dbReference type="GO" id="GO:0070475">
    <property type="term" value="P:rRNA base methylation"/>
    <property type="evidence" value="ECO:0007669"/>
    <property type="project" value="TreeGrafter"/>
</dbReference>
<dbReference type="CDD" id="cd02440">
    <property type="entry name" value="AdoMet_MTases"/>
    <property type="match status" value="1"/>
</dbReference>
<dbReference type="FunFam" id="3.40.50.150:FF:000009">
    <property type="entry name" value="23S rRNA (Uracil(1939)-C(5))-methyltransferase RlmD"/>
    <property type="match status" value="1"/>
</dbReference>
<dbReference type="Gene3D" id="2.40.50.1070">
    <property type="match status" value="1"/>
</dbReference>
<dbReference type="Gene3D" id="2.40.50.140">
    <property type="entry name" value="Nucleic acid-binding proteins"/>
    <property type="match status" value="1"/>
</dbReference>
<dbReference type="Gene3D" id="3.40.50.150">
    <property type="entry name" value="Vaccinia Virus protein VP39"/>
    <property type="match status" value="1"/>
</dbReference>
<dbReference type="InterPro" id="IPR030391">
    <property type="entry name" value="MeTrfase_TrmA_CS"/>
</dbReference>
<dbReference type="InterPro" id="IPR012340">
    <property type="entry name" value="NA-bd_OB-fold"/>
</dbReference>
<dbReference type="InterPro" id="IPR029063">
    <property type="entry name" value="SAM-dependent_MTases_sf"/>
</dbReference>
<dbReference type="InterPro" id="IPR002792">
    <property type="entry name" value="TRAM_dom"/>
</dbReference>
<dbReference type="InterPro" id="IPR010280">
    <property type="entry name" value="U5_MeTrfase_fam"/>
</dbReference>
<dbReference type="PANTHER" id="PTHR11061">
    <property type="entry name" value="RNA M5U METHYLTRANSFERASE"/>
    <property type="match status" value="1"/>
</dbReference>
<dbReference type="PANTHER" id="PTHR11061:SF30">
    <property type="entry name" value="TRNA (URACIL(54)-C(5))-METHYLTRANSFERASE"/>
    <property type="match status" value="1"/>
</dbReference>
<dbReference type="Pfam" id="PF01938">
    <property type="entry name" value="TRAM"/>
    <property type="match status" value="1"/>
</dbReference>
<dbReference type="Pfam" id="PF05958">
    <property type="entry name" value="tRNA_U5-meth_tr"/>
    <property type="match status" value="1"/>
</dbReference>
<dbReference type="SUPFAM" id="SSF50249">
    <property type="entry name" value="Nucleic acid-binding proteins"/>
    <property type="match status" value="1"/>
</dbReference>
<dbReference type="SUPFAM" id="SSF53335">
    <property type="entry name" value="S-adenosyl-L-methionine-dependent methyltransferases"/>
    <property type="match status" value="1"/>
</dbReference>
<dbReference type="PROSITE" id="PS51687">
    <property type="entry name" value="SAM_MT_RNA_M5U"/>
    <property type="match status" value="1"/>
</dbReference>
<dbReference type="PROSITE" id="PS50926">
    <property type="entry name" value="TRAM"/>
    <property type="match status" value="1"/>
</dbReference>
<dbReference type="PROSITE" id="PS01231">
    <property type="entry name" value="TRMA_2"/>
    <property type="match status" value="1"/>
</dbReference>